<keyword id="KW-0325">Glycoprotein</keyword>
<keyword id="KW-0472">Membrane</keyword>
<keyword id="KW-1185">Reference proteome</keyword>
<keyword id="KW-0812">Transmembrane</keyword>
<keyword id="KW-1133">Transmembrane helix</keyword>
<reference key="1">
    <citation type="journal article" date="1998" name="Science">
        <title>Genome sequence of the nematode C. elegans: a platform for investigating biology.</title>
        <authorList>
            <consortium name="The C. elegans sequencing consortium"/>
        </authorList>
    </citation>
    <scope>NUCLEOTIDE SEQUENCE [LARGE SCALE GENOMIC DNA]</scope>
    <source>
        <strain>Bristol N2</strain>
    </source>
</reference>
<dbReference type="EMBL" id="BX284602">
    <property type="protein sequence ID" value="CCD64854.1"/>
    <property type="molecule type" value="Genomic_DNA"/>
</dbReference>
<dbReference type="PIR" id="T16943">
    <property type="entry name" value="T16943"/>
</dbReference>
<dbReference type="RefSeq" id="NP_001364710.1">
    <property type="nucleotide sequence ID" value="NM_001377802.1"/>
</dbReference>
<dbReference type="RefSeq" id="NP_495081.2">
    <property type="nucleotide sequence ID" value="NM_062680.2"/>
</dbReference>
<dbReference type="FunCoup" id="Q10015">
    <property type="interactions" value="1522"/>
</dbReference>
<dbReference type="STRING" id="6239.T25E4.2.1"/>
<dbReference type="PaxDb" id="6239-T25E4.2"/>
<dbReference type="EnsemblMetazoa" id="T25E4.2.1">
    <property type="protein sequence ID" value="T25E4.2.1"/>
    <property type="gene ID" value="WBGene00020804"/>
</dbReference>
<dbReference type="GeneID" id="188897"/>
<dbReference type="UCSC" id="T25E4.2">
    <property type="organism name" value="c. elegans"/>
</dbReference>
<dbReference type="AGR" id="WB:WBGene00020804"/>
<dbReference type="WormBase" id="T25E4.2">
    <property type="protein sequence ID" value="CE53826"/>
    <property type="gene ID" value="WBGene00020804"/>
</dbReference>
<dbReference type="eggNOG" id="KOG1052">
    <property type="taxonomic scope" value="Eukaryota"/>
</dbReference>
<dbReference type="GeneTree" id="ENSGT00970000196073"/>
<dbReference type="HOGENOM" id="CLU_048798_0_0_1"/>
<dbReference type="InParanoid" id="Q10015"/>
<dbReference type="OrthoDB" id="5784654at2759"/>
<dbReference type="PRO" id="PR:Q10015"/>
<dbReference type="Proteomes" id="UP000001940">
    <property type="component" value="Chromosome II"/>
</dbReference>
<dbReference type="GO" id="GO:0016020">
    <property type="term" value="C:membrane"/>
    <property type="evidence" value="ECO:0007669"/>
    <property type="project" value="UniProtKB-SubCell"/>
</dbReference>
<dbReference type="Gene3D" id="3.40.190.10">
    <property type="entry name" value="Periplasmic binding protein-like II"/>
    <property type="match status" value="1"/>
</dbReference>
<dbReference type="InterPro" id="IPR001638">
    <property type="entry name" value="Solute-binding_3/MltF_N"/>
</dbReference>
<dbReference type="InterPro" id="IPR040128">
    <property type="entry name" value="T25E4.2-like"/>
</dbReference>
<dbReference type="PANTHER" id="PTHR22714:SF8">
    <property type="entry name" value="PROTEIN CBG02446"/>
    <property type="match status" value="1"/>
</dbReference>
<dbReference type="PANTHER" id="PTHR22714">
    <property type="entry name" value="PROTEIN CBG02446-RELATED"/>
    <property type="match status" value="1"/>
</dbReference>
<dbReference type="Pfam" id="PF00497">
    <property type="entry name" value="SBP_bac_3"/>
    <property type="match status" value="1"/>
</dbReference>
<dbReference type="SUPFAM" id="SSF53850">
    <property type="entry name" value="Periplasmic binding protein-like II"/>
    <property type="match status" value="1"/>
</dbReference>
<evidence type="ECO:0000255" key="1"/>
<evidence type="ECO:0000255" key="2">
    <source>
        <dbReference type="PROSITE-ProRule" id="PRU00498"/>
    </source>
</evidence>
<evidence type="ECO:0000312" key="3">
    <source>
        <dbReference type="WormBase" id="T25E4.2"/>
    </source>
</evidence>
<gene>
    <name evidence="3" type="ORF">T25E4.2</name>
</gene>
<sequence>MKPGFKDLRAVGYQTDVPYVSLSNYCWSFNCPKPGAEVEFLNMTFQLMNSTATIVQIDADIEQSIDMVSNGSADITLVSARQTLDRMKKVDFTTPIGFVYYGYLVREIPELAVADYIMRLFDYDTLAILISFGLIIGALLYLYTWIFGLRVRSLLDWMFISCSGIIHQFMFRISSPICALVLIGFWLLCCLVIITYYEAKLKSFLLLSHHRGTIFNTLDGVLEAAEHKGWTLVIQERGYTPYLYCNPSQCARLDRLKSRINFIGADDDANLLLGQDKHVGFSALASDLAETDITYFDYHSKILFVRDKIMAPEYLAYAVNKNVKGLREKFNRAVAYTKSGYGTVRSRYIASFPSYNSVTSQSQTITVLQTSHFIQLYKFCFIFYGIAIIVFILEIIFHRMTKNFTFFGHSYNYHLSGFEWRFARPKWIHFPRRNTVILPLSKSYSPDNERRVTVC</sequence>
<organism>
    <name type="scientific">Caenorhabditis elegans</name>
    <dbReference type="NCBI Taxonomy" id="6239"/>
    <lineage>
        <taxon>Eukaryota</taxon>
        <taxon>Metazoa</taxon>
        <taxon>Ecdysozoa</taxon>
        <taxon>Nematoda</taxon>
        <taxon>Chromadorea</taxon>
        <taxon>Rhabditida</taxon>
        <taxon>Rhabditina</taxon>
        <taxon>Rhabditomorpha</taxon>
        <taxon>Rhabditoidea</taxon>
        <taxon>Rhabditidae</taxon>
        <taxon>Peloderinae</taxon>
        <taxon>Caenorhabditis</taxon>
    </lineage>
</organism>
<name>YR02_CAEEL</name>
<protein>
    <recommendedName>
        <fullName>Uncharacterized protein T25E4.2</fullName>
    </recommendedName>
</protein>
<accession>Q10015</accession>
<feature type="chain" id="PRO_0000065481" description="Uncharacterized protein T25E4.2">
    <location>
        <begin position="1"/>
        <end position="455"/>
    </location>
</feature>
<feature type="transmembrane region" description="Helical" evidence="1">
    <location>
        <begin position="127"/>
        <end position="147"/>
    </location>
</feature>
<feature type="transmembrane region" description="Helical" evidence="1">
    <location>
        <begin position="153"/>
        <end position="173"/>
    </location>
</feature>
<feature type="transmembrane region" description="Helical" evidence="1">
    <location>
        <begin position="177"/>
        <end position="197"/>
    </location>
</feature>
<feature type="transmembrane region" description="Helical" evidence="1">
    <location>
        <begin position="377"/>
        <end position="397"/>
    </location>
</feature>
<feature type="glycosylation site" description="N-linked (GlcNAc...) asparagine" evidence="2">
    <location>
        <position position="42"/>
    </location>
</feature>
<feature type="glycosylation site" description="N-linked (GlcNAc...) asparagine" evidence="2">
    <location>
        <position position="49"/>
    </location>
</feature>
<feature type="glycosylation site" description="N-linked (GlcNAc...) asparagine" evidence="2">
    <location>
        <position position="70"/>
    </location>
</feature>
<feature type="glycosylation site" description="N-linked (GlcNAc...) asparagine" evidence="2">
    <location>
        <position position="403"/>
    </location>
</feature>
<comment type="subcellular location">
    <subcellularLocation>
        <location evidence="1">Membrane</location>
        <topology evidence="1">Multi-pass membrane protein</topology>
    </subcellularLocation>
</comment>
<proteinExistence type="inferred from homology"/>